<evidence type="ECO:0000250" key="1"/>
<evidence type="ECO:0000250" key="2">
    <source>
        <dbReference type="UniProtKB" id="P0A884"/>
    </source>
</evidence>
<evidence type="ECO:0000305" key="3"/>
<evidence type="ECO:0007829" key="4">
    <source>
        <dbReference type="PDB" id="4XSC"/>
    </source>
</evidence>
<evidence type="ECO:0007829" key="5">
    <source>
        <dbReference type="PDB" id="4XSD"/>
    </source>
</evidence>
<evidence type="ECO:0007829" key="6">
    <source>
        <dbReference type="PDB" id="4XSE"/>
    </source>
</evidence>
<feature type="chain" id="PRO_0000385165" description="Thymidylate synthase">
    <location>
        <begin position="1"/>
        <end position="301"/>
    </location>
</feature>
<feature type="active site" description="Nucleophile" evidence="2">
    <location>
        <position position="183"/>
    </location>
</feature>
<feature type="binding site" description="in other chain" evidence="2">
    <location>
        <position position="38"/>
    </location>
    <ligand>
        <name>dUMP</name>
        <dbReference type="ChEBI" id="CHEBI:246422"/>
        <note>ligand shared between dimeric partners</note>
    </ligand>
</feature>
<feature type="binding site" evidence="2">
    <location>
        <begin position="163"/>
        <end position="164"/>
    </location>
    <ligand>
        <name>dUMP</name>
        <dbReference type="ChEBI" id="CHEBI:246422"/>
        <note>ligand shared between dimeric partners</note>
    </ligand>
</feature>
<feature type="binding site" description="in other chain" evidence="2">
    <location>
        <begin position="203"/>
        <end position="206"/>
    </location>
    <ligand>
        <name>dUMP</name>
        <dbReference type="ChEBI" id="CHEBI:246422"/>
        <note>ligand shared between dimeric partners</note>
    </ligand>
</feature>
<feature type="binding site" evidence="2">
    <location>
        <position position="206"/>
    </location>
    <ligand>
        <name>(6R)-5,10-methylene-5,6,7,8-tetrahydrofolate</name>
        <dbReference type="ChEBI" id="CHEBI:15636"/>
    </ligand>
</feature>
<feature type="binding site" description="in other chain" evidence="2">
    <location>
        <position position="214"/>
    </location>
    <ligand>
        <name>dUMP</name>
        <dbReference type="ChEBI" id="CHEBI:246422"/>
        <note>ligand shared between dimeric partners</note>
    </ligand>
</feature>
<feature type="binding site" description="in other chain" evidence="2">
    <location>
        <begin position="244"/>
        <end position="246"/>
    </location>
    <ligand>
        <name>dUMP</name>
        <dbReference type="ChEBI" id="CHEBI:246422"/>
        <note>ligand shared between dimeric partners</note>
    </ligand>
</feature>
<feature type="binding site" evidence="2">
    <location>
        <position position="300"/>
    </location>
    <ligand>
        <name>(6R)-5,10-methylene-5,6,7,8-tetrahydrofolate</name>
        <dbReference type="ChEBI" id="CHEBI:15636"/>
    </ligand>
</feature>
<feature type="helix" evidence="5">
    <location>
        <begin position="19"/>
        <end position="28"/>
    </location>
</feature>
<feature type="strand" evidence="5">
    <location>
        <begin position="33"/>
        <end position="36"/>
    </location>
</feature>
<feature type="strand" evidence="5">
    <location>
        <begin position="42"/>
        <end position="46"/>
    </location>
</feature>
<feature type="strand" evidence="5">
    <location>
        <begin position="49"/>
        <end position="54"/>
    </location>
</feature>
<feature type="strand" evidence="6">
    <location>
        <begin position="56"/>
        <end position="58"/>
    </location>
</feature>
<feature type="turn" evidence="5">
    <location>
        <begin position="63"/>
        <end position="66"/>
    </location>
</feature>
<feature type="helix" evidence="5">
    <location>
        <begin position="69"/>
        <end position="81"/>
    </location>
</feature>
<feature type="helix" evidence="5">
    <location>
        <begin position="87"/>
        <end position="90"/>
    </location>
</feature>
<feature type="turn" evidence="5">
    <location>
        <begin position="91"/>
        <end position="93"/>
    </location>
</feature>
<feature type="turn" evidence="5">
    <location>
        <begin position="98"/>
        <end position="101"/>
    </location>
</feature>
<feature type="helix" evidence="5">
    <location>
        <begin position="103"/>
        <end position="106"/>
    </location>
</feature>
<feature type="turn" evidence="5">
    <location>
        <begin position="107"/>
        <end position="110"/>
    </location>
</feature>
<feature type="helix" evidence="5">
    <location>
        <begin position="123"/>
        <end position="128"/>
    </location>
</feature>
<feature type="strand" evidence="4">
    <location>
        <begin position="144"/>
        <end position="146"/>
    </location>
</feature>
<feature type="helix" evidence="5">
    <location>
        <begin position="148"/>
        <end position="158"/>
    </location>
</feature>
<feature type="strand" evidence="5">
    <location>
        <begin position="166"/>
        <end position="168"/>
    </location>
</feature>
<feature type="turn" evidence="5">
    <location>
        <begin position="172"/>
        <end position="174"/>
    </location>
</feature>
<feature type="helix" evidence="5">
    <location>
        <begin position="175"/>
        <end position="177"/>
    </location>
</feature>
<feature type="strand" evidence="5">
    <location>
        <begin position="178"/>
        <end position="180"/>
    </location>
</feature>
<feature type="strand" evidence="5">
    <location>
        <begin position="183"/>
        <end position="192"/>
    </location>
</feature>
<feature type="strand" evidence="5">
    <location>
        <begin position="195"/>
        <end position="206"/>
    </location>
</feature>
<feature type="turn" evidence="5">
    <location>
        <begin position="207"/>
        <end position="209"/>
    </location>
</feature>
<feature type="helix" evidence="5">
    <location>
        <begin position="210"/>
        <end position="228"/>
    </location>
</feature>
<feature type="strand" evidence="5">
    <location>
        <begin position="232"/>
        <end position="246"/>
    </location>
</feature>
<feature type="helix" evidence="5">
    <location>
        <begin position="249"/>
        <end position="256"/>
    </location>
</feature>
<feature type="strand" evidence="5">
    <location>
        <begin position="266"/>
        <end position="269"/>
    </location>
</feature>
<feature type="helix" evidence="5">
    <location>
        <begin position="276"/>
        <end position="278"/>
    </location>
</feature>
<feature type="helix" evidence="5">
    <location>
        <begin position="281"/>
        <end position="283"/>
    </location>
</feature>
<feature type="strand" evidence="5">
    <location>
        <begin position="284"/>
        <end position="287"/>
    </location>
</feature>
<proteinExistence type="evidence at protein level"/>
<gene>
    <name type="ORF">ORF13</name>
</gene>
<name>TYSY_VZVO</name>
<organism>
    <name type="scientific">Varicella-zoster virus (strain Oka vaccine)</name>
    <name type="common">HHV-3</name>
    <name type="synonym">Human herpesvirus 3</name>
    <dbReference type="NCBI Taxonomy" id="341980"/>
    <lineage>
        <taxon>Viruses</taxon>
        <taxon>Duplodnaviria</taxon>
        <taxon>Heunggongvirae</taxon>
        <taxon>Peploviricota</taxon>
        <taxon>Herviviricetes</taxon>
        <taxon>Herpesvirales</taxon>
        <taxon>Orthoherpesviridae</taxon>
        <taxon>Alphaherpesvirinae</taxon>
        <taxon>Varicellovirus</taxon>
        <taxon>Varicellovirus humanalpha3</taxon>
        <taxon>Human herpesvirus 3</taxon>
    </lineage>
</organism>
<dbReference type="EC" id="2.1.1.45"/>
<dbReference type="EMBL" id="AB097932">
    <property type="status" value="NOT_ANNOTATED_CDS"/>
    <property type="molecule type" value="Genomic_DNA"/>
</dbReference>
<dbReference type="EMBL" id="AB097933">
    <property type="status" value="NOT_ANNOTATED_CDS"/>
    <property type="molecule type" value="Genomic_DNA"/>
</dbReference>
<dbReference type="EMBL" id="DQ008354">
    <property type="protein sequence ID" value="AAY57630.1"/>
    <property type="molecule type" value="Genomic_DNA"/>
</dbReference>
<dbReference type="EMBL" id="DQ008355">
    <property type="protein sequence ID" value="AAY57701.1"/>
    <property type="molecule type" value="Genomic_DNA"/>
</dbReference>
<dbReference type="RefSeq" id="NP_040136.1">
    <property type="nucleotide sequence ID" value="NC_001348.1"/>
</dbReference>
<dbReference type="PDB" id="4XSC">
    <property type="method" value="X-ray"/>
    <property type="resolution" value="2.90 A"/>
    <property type="chains" value="A/B/C/D=8-295"/>
</dbReference>
<dbReference type="PDB" id="4XSD">
    <property type="method" value="X-ray"/>
    <property type="resolution" value="2.90 A"/>
    <property type="chains" value="A/B/C/D=8-295"/>
</dbReference>
<dbReference type="PDB" id="4XSE">
    <property type="method" value="X-ray"/>
    <property type="resolution" value="3.10 A"/>
    <property type="chains" value="A/B/C/D=8-295"/>
</dbReference>
<dbReference type="PDBsum" id="4XSC"/>
<dbReference type="PDBsum" id="4XSD"/>
<dbReference type="PDBsum" id="4XSE"/>
<dbReference type="SMR" id="Q4JQW2"/>
<dbReference type="IntAct" id="Q4JQW2">
    <property type="interactions" value="2"/>
</dbReference>
<dbReference type="DNASU" id="1487659"/>
<dbReference type="GeneID" id="1487659"/>
<dbReference type="KEGG" id="vg:1487659"/>
<dbReference type="UniPathway" id="UPA00575"/>
<dbReference type="EvolutionaryTrace" id="Q4JQW2"/>
<dbReference type="Proteomes" id="UP000002603">
    <property type="component" value="Genome"/>
</dbReference>
<dbReference type="Proteomes" id="UP000008504">
    <property type="component" value="Genome"/>
</dbReference>
<dbReference type="Proteomes" id="UP000008505">
    <property type="component" value="Genome"/>
</dbReference>
<dbReference type="Proteomes" id="UP000008506">
    <property type="component" value="Genome"/>
</dbReference>
<dbReference type="GO" id="GO:0004799">
    <property type="term" value="F:thymidylate synthase activity"/>
    <property type="evidence" value="ECO:0007669"/>
    <property type="project" value="UniProtKB-EC"/>
</dbReference>
<dbReference type="GO" id="GO:0006231">
    <property type="term" value="P:dTMP biosynthetic process"/>
    <property type="evidence" value="ECO:0007669"/>
    <property type="project" value="InterPro"/>
</dbReference>
<dbReference type="GO" id="GO:0006235">
    <property type="term" value="P:dTTP biosynthetic process"/>
    <property type="evidence" value="ECO:0007669"/>
    <property type="project" value="UniProtKB-UniPathway"/>
</dbReference>
<dbReference type="GO" id="GO:0032259">
    <property type="term" value="P:methylation"/>
    <property type="evidence" value="ECO:0007669"/>
    <property type="project" value="UniProtKB-KW"/>
</dbReference>
<dbReference type="CDD" id="cd00351">
    <property type="entry name" value="TS_Pyrimidine_HMase"/>
    <property type="match status" value="1"/>
</dbReference>
<dbReference type="FunFam" id="3.30.572.10:FF:000002">
    <property type="entry name" value="Possible thymidylate synthase"/>
    <property type="match status" value="1"/>
</dbReference>
<dbReference type="Gene3D" id="3.30.572.10">
    <property type="entry name" value="Thymidylate synthase/dCMP hydroxymethylase domain"/>
    <property type="match status" value="1"/>
</dbReference>
<dbReference type="HAMAP" id="MF_00008">
    <property type="entry name" value="Thymidy_synth_bact"/>
    <property type="match status" value="1"/>
</dbReference>
<dbReference type="InterPro" id="IPR045097">
    <property type="entry name" value="Thymidate_synth/dCMP_Mease"/>
</dbReference>
<dbReference type="InterPro" id="IPR023451">
    <property type="entry name" value="Thymidate_synth/dCMP_Mease_dom"/>
</dbReference>
<dbReference type="InterPro" id="IPR036926">
    <property type="entry name" value="Thymidate_synth/dCMP_Mease_sf"/>
</dbReference>
<dbReference type="InterPro" id="IPR000398">
    <property type="entry name" value="Thymidylate_synthase"/>
</dbReference>
<dbReference type="InterPro" id="IPR020940">
    <property type="entry name" value="Thymidylate_synthase_AS"/>
</dbReference>
<dbReference type="NCBIfam" id="NF002497">
    <property type="entry name" value="PRK01827.1-3"/>
    <property type="match status" value="1"/>
</dbReference>
<dbReference type="NCBIfam" id="TIGR03284">
    <property type="entry name" value="thym_sym"/>
    <property type="match status" value="1"/>
</dbReference>
<dbReference type="PANTHER" id="PTHR11548:SF2">
    <property type="entry name" value="THYMIDYLATE SYNTHASE"/>
    <property type="match status" value="1"/>
</dbReference>
<dbReference type="PANTHER" id="PTHR11548">
    <property type="entry name" value="THYMIDYLATE SYNTHASE 1"/>
    <property type="match status" value="1"/>
</dbReference>
<dbReference type="Pfam" id="PF00303">
    <property type="entry name" value="Thymidylat_synt"/>
    <property type="match status" value="1"/>
</dbReference>
<dbReference type="PRINTS" id="PR00108">
    <property type="entry name" value="THYMDSNTHASE"/>
</dbReference>
<dbReference type="SUPFAM" id="SSF55831">
    <property type="entry name" value="Thymidylate synthase/dCMP hydroxymethylase"/>
    <property type="match status" value="1"/>
</dbReference>
<dbReference type="PROSITE" id="PS00091">
    <property type="entry name" value="THYMIDYLATE_SYNTHASE"/>
    <property type="match status" value="1"/>
</dbReference>
<accession>Q4JQW2</accession>
<sequence length="301" mass="34533">MGDLSCWTKVPGFTLTGELQYLKQVDDILRYGVRKRDRTGIGTLSLFGMQARYNLRNEFPLLTTKRVFWRAVVEELLWFIRGSTDSKELAAKDIHIWDIYGSSKFLNRNGFHKRHTGDLGPIYGFQWRHFGAEYKDCQSNYLQQGIDQLQTVIDTIKTNPESRRMIISSWNPKDIPLMVLPPCHTLCQFYVANGELSCQVYQRSGDMGLGVPFNIAGYALLTYIVAHVTGLKTGDLIHTMGDAHIYLNHIDALKVQLARSPKPFPCLKIIRNVTDINDFKWDDFQLDGYNPHPPLKMEMAL</sequence>
<reference key="1">
    <citation type="journal article" date="2002" name="J. Virol.">
        <title>Comparison of the complete DNA sequences of the Oka varicella vaccine and its parental virus.</title>
        <authorList>
            <person name="Gomi Y."/>
            <person name="Sunamachi H."/>
            <person name="Mori Y."/>
            <person name="Nagaike K."/>
            <person name="Takahashi M."/>
            <person name="Yamanishi K."/>
        </authorList>
    </citation>
    <scope>NUCLEOTIDE SEQUENCE [LARGE SCALE GENOMIC DNA]</scope>
    <source>
        <strain>Isolate Human/Japan/P-Oka/1970</strain>
        <strain>Oka varicella vaccine Biken (V-Oka-Biken)</strain>
    </source>
</reference>
<reference key="2">
    <citation type="journal article" date="2008" name="J. Virol.">
        <title>Complete DNA sequences of two oka strain varicella-zoster virus genomes.</title>
        <authorList>
            <person name="Tillieux S.L."/>
            <person name="Halsey W.S."/>
            <person name="Thomas E.S."/>
            <person name="Voycik J.J."/>
            <person name="Sathe G.M."/>
            <person name="Vassilev V."/>
        </authorList>
    </citation>
    <scope>NUCLEOTIDE SEQUENCE [LARGE SCALE GENOMIC DNA]</scope>
    <source>
        <strain>Oka varicella vaccine VarilRix (V-Oka-GSK)</strain>
        <strain>Oka varicella vaccine Varivax (V-Oka-Merck)</strain>
    </source>
</reference>
<keyword id="KW-0002">3D-structure</keyword>
<keyword id="KW-0489">Methyltransferase</keyword>
<keyword id="KW-0545">Nucleotide biosynthesis</keyword>
<keyword id="KW-0808">Transferase</keyword>
<protein>
    <recommendedName>
        <fullName>Thymidylate synthase</fullName>
        <shortName>TS</shortName>
        <shortName>TSase</shortName>
        <ecNumber>2.1.1.45</ecNumber>
    </recommendedName>
</protein>
<comment type="function">
    <text evidence="1">Catalyzes the reductive methylation of deoxyuridylate to thymidylate.</text>
</comment>
<comment type="catalytic activity">
    <reaction>
        <text>dUMP + (6R)-5,10-methylene-5,6,7,8-tetrahydrofolate = 7,8-dihydrofolate + dTMP</text>
        <dbReference type="Rhea" id="RHEA:12104"/>
        <dbReference type="ChEBI" id="CHEBI:15636"/>
        <dbReference type="ChEBI" id="CHEBI:57451"/>
        <dbReference type="ChEBI" id="CHEBI:63528"/>
        <dbReference type="ChEBI" id="CHEBI:246422"/>
        <dbReference type="EC" id="2.1.1.45"/>
    </reaction>
</comment>
<comment type="pathway">
    <text>Pyrimidine metabolism; dTTP biosynthesis.</text>
</comment>
<comment type="subunit">
    <text evidence="1">Homodimer.</text>
</comment>
<comment type="similarity">
    <text evidence="3">Belongs to the thymidylate synthase family.</text>
</comment>
<organismHost>
    <name type="scientific">Homo sapiens</name>
    <name type="common">Human</name>
    <dbReference type="NCBI Taxonomy" id="9606"/>
</organismHost>